<name>GLMU_PARDP</name>
<reference key="1">
    <citation type="submission" date="2006-12" db="EMBL/GenBank/DDBJ databases">
        <title>Complete sequence of chromosome 1 of Paracoccus denitrificans PD1222.</title>
        <authorList>
            <person name="Copeland A."/>
            <person name="Lucas S."/>
            <person name="Lapidus A."/>
            <person name="Barry K."/>
            <person name="Detter J.C."/>
            <person name="Glavina del Rio T."/>
            <person name="Hammon N."/>
            <person name="Israni S."/>
            <person name="Dalin E."/>
            <person name="Tice H."/>
            <person name="Pitluck S."/>
            <person name="Munk A.C."/>
            <person name="Brettin T."/>
            <person name="Bruce D."/>
            <person name="Han C."/>
            <person name="Tapia R."/>
            <person name="Gilna P."/>
            <person name="Schmutz J."/>
            <person name="Larimer F."/>
            <person name="Land M."/>
            <person name="Hauser L."/>
            <person name="Kyrpides N."/>
            <person name="Lykidis A."/>
            <person name="Spiro S."/>
            <person name="Richardson D.J."/>
            <person name="Moir J.W.B."/>
            <person name="Ferguson S.J."/>
            <person name="van Spanning R.J.M."/>
            <person name="Richardson P."/>
        </authorList>
    </citation>
    <scope>NUCLEOTIDE SEQUENCE [LARGE SCALE GENOMIC DNA]</scope>
    <source>
        <strain>Pd 1222</strain>
    </source>
</reference>
<accession>A1AZN6</accession>
<feature type="chain" id="PRO_0000337736" description="Bifunctional protein GlmU">
    <location>
        <begin position="1"/>
        <end position="446"/>
    </location>
</feature>
<feature type="region of interest" description="Pyrophosphorylase" evidence="1">
    <location>
        <begin position="1"/>
        <end position="229"/>
    </location>
</feature>
<feature type="region of interest" description="Linker" evidence="1">
    <location>
        <begin position="230"/>
        <end position="250"/>
    </location>
</feature>
<feature type="region of interest" description="N-acetyltransferase" evidence="1">
    <location>
        <begin position="251"/>
        <end position="446"/>
    </location>
</feature>
<feature type="active site" description="Proton acceptor" evidence="1">
    <location>
        <position position="346"/>
    </location>
</feature>
<feature type="binding site" evidence="1">
    <location>
        <begin position="11"/>
        <end position="14"/>
    </location>
    <ligand>
        <name>UDP-N-acetyl-alpha-D-glucosamine</name>
        <dbReference type="ChEBI" id="CHEBI:57705"/>
    </ligand>
</feature>
<feature type="binding site" evidence="1">
    <location>
        <position position="25"/>
    </location>
    <ligand>
        <name>UDP-N-acetyl-alpha-D-glucosamine</name>
        <dbReference type="ChEBI" id="CHEBI:57705"/>
    </ligand>
</feature>
<feature type="binding site" evidence="1">
    <location>
        <position position="78"/>
    </location>
    <ligand>
        <name>UDP-N-acetyl-alpha-D-glucosamine</name>
        <dbReference type="ChEBI" id="CHEBI:57705"/>
    </ligand>
</feature>
<feature type="binding site" evidence="1">
    <location>
        <begin position="83"/>
        <end position="84"/>
    </location>
    <ligand>
        <name>UDP-N-acetyl-alpha-D-glucosamine</name>
        <dbReference type="ChEBI" id="CHEBI:57705"/>
    </ligand>
</feature>
<feature type="binding site" evidence="1">
    <location>
        <begin position="106"/>
        <end position="108"/>
    </location>
    <ligand>
        <name>UDP-N-acetyl-alpha-D-glucosamine</name>
        <dbReference type="ChEBI" id="CHEBI:57705"/>
    </ligand>
</feature>
<feature type="binding site" evidence="1">
    <location>
        <position position="108"/>
    </location>
    <ligand>
        <name>Mg(2+)</name>
        <dbReference type="ChEBI" id="CHEBI:18420"/>
    </ligand>
</feature>
<feature type="binding site" evidence="1">
    <location>
        <position position="141"/>
    </location>
    <ligand>
        <name>UDP-N-acetyl-alpha-D-glucosamine</name>
        <dbReference type="ChEBI" id="CHEBI:57705"/>
    </ligand>
</feature>
<feature type="binding site" evidence="1">
    <location>
        <position position="155"/>
    </location>
    <ligand>
        <name>UDP-N-acetyl-alpha-D-glucosamine</name>
        <dbReference type="ChEBI" id="CHEBI:57705"/>
    </ligand>
</feature>
<feature type="binding site" evidence="1">
    <location>
        <position position="170"/>
    </location>
    <ligand>
        <name>UDP-N-acetyl-alpha-D-glucosamine</name>
        <dbReference type="ChEBI" id="CHEBI:57705"/>
    </ligand>
</feature>
<feature type="binding site" evidence="1">
    <location>
        <position position="227"/>
    </location>
    <ligand>
        <name>Mg(2+)</name>
        <dbReference type="ChEBI" id="CHEBI:18420"/>
    </ligand>
</feature>
<feature type="binding site" evidence="1">
    <location>
        <position position="227"/>
    </location>
    <ligand>
        <name>UDP-N-acetyl-alpha-D-glucosamine</name>
        <dbReference type="ChEBI" id="CHEBI:57705"/>
    </ligand>
</feature>
<feature type="binding site" evidence="1">
    <location>
        <position position="316"/>
    </location>
    <ligand>
        <name>UDP-N-acetyl-alpha-D-glucosamine</name>
        <dbReference type="ChEBI" id="CHEBI:57705"/>
    </ligand>
</feature>
<feature type="binding site" evidence="1">
    <location>
        <position position="334"/>
    </location>
    <ligand>
        <name>UDP-N-acetyl-alpha-D-glucosamine</name>
        <dbReference type="ChEBI" id="CHEBI:57705"/>
    </ligand>
</feature>
<feature type="binding site" evidence="1">
    <location>
        <position position="349"/>
    </location>
    <ligand>
        <name>UDP-N-acetyl-alpha-D-glucosamine</name>
        <dbReference type="ChEBI" id="CHEBI:57705"/>
    </ligand>
</feature>
<feature type="binding site" evidence="1">
    <location>
        <position position="360"/>
    </location>
    <ligand>
        <name>UDP-N-acetyl-alpha-D-glucosamine</name>
        <dbReference type="ChEBI" id="CHEBI:57705"/>
    </ligand>
</feature>
<feature type="binding site" evidence="1">
    <location>
        <position position="363"/>
    </location>
    <ligand>
        <name>acetyl-CoA</name>
        <dbReference type="ChEBI" id="CHEBI:57288"/>
    </ligand>
</feature>
<feature type="binding site" evidence="1">
    <location>
        <begin position="369"/>
        <end position="370"/>
    </location>
    <ligand>
        <name>acetyl-CoA</name>
        <dbReference type="ChEBI" id="CHEBI:57288"/>
    </ligand>
</feature>
<feature type="binding site" evidence="1">
    <location>
        <position position="388"/>
    </location>
    <ligand>
        <name>acetyl-CoA</name>
        <dbReference type="ChEBI" id="CHEBI:57288"/>
    </ligand>
</feature>
<feature type="binding site" evidence="1">
    <location>
        <position position="406"/>
    </location>
    <ligand>
        <name>acetyl-CoA</name>
        <dbReference type="ChEBI" id="CHEBI:57288"/>
    </ligand>
</feature>
<feature type="binding site" evidence="1">
    <location>
        <position position="423"/>
    </location>
    <ligand>
        <name>acetyl-CoA</name>
        <dbReference type="ChEBI" id="CHEBI:57288"/>
    </ligand>
</feature>
<organism>
    <name type="scientific">Paracoccus denitrificans (strain Pd 1222)</name>
    <dbReference type="NCBI Taxonomy" id="318586"/>
    <lineage>
        <taxon>Bacteria</taxon>
        <taxon>Pseudomonadati</taxon>
        <taxon>Pseudomonadota</taxon>
        <taxon>Alphaproteobacteria</taxon>
        <taxon>Rhodobacterales</taxon>
        <taxon>Paracoccaceae</taxon>
        <taxon>Paracoccus</taxon>
    </lineage>
</organism>
<gene>
    <name evidence="1" type="primary">glmU</name>
    <name type="ordered locus">Pden_0618</name>
</gene>
<keyword id="KW-0012">Acyltransferase</keyword>
<keyword id="KW-0133">Cell shape</keyword>
<keyword id="KW-0961">Cell wall biogenesis/degradation</keyword>
<keyword id="KW-0963">Cytoplasm</keyword>
<keyword id="KW-0460">Magnesium</keyword>
<keyword id="KW-0479">Metal-binding</keyword>
<keyword id="KW-0511">Multifunctional enzyme</keyword>
<keyword id="KW-0548">Nucleotidyltransferase</keyword>
<keyword id="KW-0573">Peptidoglycan synthesis</keyword>
<keyword id="KW-1185">Reference proteome</keyword>
<keyword id="KW-0677">Repeat</keyword>
<keyword id="KW-0808">Transferase</keyword>
<comment type="function">
    <text evidence="1">Catalyzes the last two sequential reactions in the de novo biosynthetic pathway for UDP-N-acetylglucosamine (UDP-GlcNAc). The C-terminal domain catalyzes the transfer of acetyl group from acetyl coenzyme A to glucosamine-1-phosphate (GlcN-1-P) to produce N-acetylglucosamine-1-phosphate (GlcNAc-1-P), which is converted into UDP-GlcNAc by the transfer of uridine 5-monophosphate (from uridine 5-triphosphate), a reaction catalyzed by the N-terminal domain.</text>
</comment>
<comment type="catalytic activity">
    <reaction evidence="1">
        <text>alpha-D-glucosamine 1-phosphate + acetyl-CoA = N-acetyl-alpha-D-glucosamine 1-phosphate + CoA + H(+)</text>
        <dbReference type="Rhea" id="RHEA:13725"/>
        <dbReference type="ChEBI" id="CHEBI:15378"/>
        <dbReference type="ChEBI" id="CHEBI:57287"/>
        <dbReference type="ChEBI" id="CHEBI:57288"/>
        <dbReference type="ChEBI" id="CHEBI:57776"/>
        <dbReference type="ChEBI" id="CHEBI:58516"/>
        <dbReference type="EC" id="2.3.1.157"/>
    </reaction>
</comment>
<comment type="catalytic activity">
    <reaction evidence="1">
        <text>N-acetyl-alpha-D-glucosamine 1-phosphate + UTP + H(+) = UDP-N-acetyl-alpha-D-glucosamine + diphosphate</text>
        <dbReference type="Rhea" id="RHEA:13509"/>
        <dbReference type="ChEBI" id="CHEBI:15378"/>
        <dbReference type="ChEBI" id="CHEBI:33019"/>
        <dbReference type="ChEBI" id="CHEBI:46398"/>
        <dbReference type="ChEBI" id="CHEBI:57705"/>
        <dbReference type="ChEBI" id="CHEBI:57776"/>
        <dbReference type="EC" id="2.7.7.23"/>
    </reaction>
</comment>
<comment type="cofactor">
    <cofactor evidence="1">
        <name>Mg(2+)</name>
        <dbReference type="ChEBI" id="CHEBI:18420"/>
    </cofactor>
    <text evidence="1">Binds 1 Mg(2+) ion per subunit.</text>
</comment>
<comment type="pathway">
    <text evidence="1">Nucleotide-sugar biosynthesis; UDP-N-acetyl-alpha-D-glucosamine biosynthesis; N-acetyl-alpha-D-glucosamine 1-phosphate from alpha-D-glucosamine 6-phosphate (route II): step 2/2.</text>
</comment>
<comment type="pathway">
    <text evidence="1">Nucleotide-sugar biosynthesis; UDP-N-acetyl-alpha-D-glucosamine biosynthesis; UDP-N-acetyl-alpha-D-glucosamine from N-acetyl-alpha-D-glucosamine 1-phosphate: step 1/1.</text>
</comment>
<comment type="pathway">
    <text evidence="1">Bacterial outer membrane biogenesis; LPS lipid A biosynthesis.</text>
</comment>
<comment type="subunit">
    <text evidence="1">Homotrimer.</text>
</comment>
<comment type="subcellular location">
    <subcellularLocation>
        <location evidence="1">Cytoplasm</location>
    </subcellularLocation>
</comment>
<comment type="similarity">
    <text evidence="1">In the N-terminal section; belongs to the N-acetylglucosamine-1-phosphate uridyltransferase family.</text>
</comment>
<comment type="similarity">
    <text evidence="1">In the C-terminal section; belongs to the transferase hexapeptide repeat family.</text>
</comment>
<proteinExistence type="inferred from homology"/>
<protein>
    <recommendedName>
        <fullName evidence="1">Bifunctional protein GlmU</fullName>
    </recommendedName>
    <domain>
        <recommendedName>
            <fullName evidence="1">UDP-N-acetylglucosamine pyrophosphorylase</fullName>
            <ecNumber evidence="1">2.7.7.23</ecNumber>
        </recommendedName>
        <alternativeName>
            <fullName evidence="1">N-acetylglucosamine-1-phosphate uridyltransferase</fullName>
        </alternativeName>
    </domain>
    <domain>
        <recommendedName>
            <fullName evidence="1">Glucosamine-1-phosphate N-acetyltransferase</fullName>
            <ecNumber evidence="1">2.3.1.157</ecNumber>
        </recommendedName>
    </domain>
</protein>
<evidence type="ECO:0000255" key="1">
    <source>
        <dbReference type="HAMAP-Rule" id="MF_01631"/>
    </source>
</evidence>
<sequence>MTEKPVALIVLAAGQGSRMQSDLPKVLHRLGGVPLVGHALSTGRTLEPEAVVVVAGHGAEAVAKAVAKLNPEAKIALQEQQLGTGHAVSQALPQLEGFEGRVIVLYGDTPFIGQETLASLAAHPADVVVLGFEASDPGRYGRLVTGPEGLERIVEYKDADEATRAIRLVNSGVLAADAALLREFLPMIGNRNAAGEYYLTDIPELARAAGHRVEVVTCDEAETLGINTRAELAAAEAAFQVRARARALEDGVTMTDPATVWFALDTCIGRDAVIGQNVVFGPGVTVESGAEILPFCHLEGCHVSAGATVGPFARLRPGAELGGDVHVGNFVEIKNSVLDEGAKVGHLTYLGDAHVGEATNIGAGTVTCNYDGVSKHRTEIGAHAFIGSDTMLVAPVRVGARAMTGSGSVITEDVPDDALALGRAKQVVKPGLATRLMQALRQKKGN</sequence>
<dbReference type="EC" id="2.7.7.23" evidence="1"/>
<dbReference type="EC" id="2.3.1.157" evidence="1"/>
<dbReference type="EMBL" id="CP000489">
    <property type="protein sequence ID" value="ABL68730.1"/>
    <property type="molecule type" value="Genomic_DNA"/>
</dbReference>
<dbReference type="RefSeq" id="WP_011746963.1">
    <property type="nucleotide sequence ID" value="NC_008686.1"/>
</dbReference>
<dbReference type="SMR" id="A1AZN6"/>
<dbReference type="STRING" id="318586.Pden_0618"/>
<dbReference type="EnsemblBacteria" id="ABL68730">
    <property type="protein sequence ID" value="ABL68730"/>
    <property type="gene ID" value="Pden_0618"/>
</dbReference>
<dbReference type="GeneID" id="93451842"/>
<dbReference type="KEGG" id="pde:Pden_0618"/>
<dbReference type="eggNOG" id="COG1207">
    <property type="taxonomic scope" value="Bacteria"/>
</dbReference>
<dbReference type="HOGENOM" id="CLU_029499_15_2_5"/>
<dbReference type="OrthoDB" id="9775031at2"/>
<dbReference type="UniPathway" id="UPA00113">
    <property type="reaction ID" value="UER00532"/>
</dbReference>
<dbReference type="UniPathway" id="UPA00113">
    <property type="reaction ID" value="UER00533"/>
</dbReference>
<dbReference type="UniPathway" id="UPA00973"/>
<dbReference type="Proteomes" id="UP000000361">
    <property type="component" value="Chromosome 1"/>
</dbReference>
<dbReference type="GO" id="GO:0005737">
    <property type="term" value="C:cytoplasm"/>
    <property type="evidence" value="ECO:0007669"/>
    <property type="project" value="UniProtKB-SubCell"/>
</dbReference>
<dbReference type="GO" id="GO:0016020">
    <property type="term" value="C:membrane"/>
    <property type="evidence" value="ECO:0007669"/>
    <property type="project" value="GOC"/>
</dbReference>
<dbReference type="GO" id="GO:0019134">
    <property type="term" value="F:glucosamine-1-phosphate N-acetyltransferase activity"/>
    <property type="evidence" value="ECO:0007669"/>
    <property type="project" value="UniProtKB-UniRule"/>
</dbReference>
<dbReference type="GO" id="GO:0000287">
    <property type="term" value="F:magnesium ion binding"/>
    <property type="evidence" value="ECO:0007669"/>
    <property type="project" value="UniProtKB-UniRule"/>
</dbReference>
<dbReference type="GO" id="GO:0003977">
    <property type="term" value="F:UDP-N-acetylglucosamine diphosphorylase activity"/>
    <property type="evidence" value="ECO:0007669"/>
    <property type="project" value="UniProtKB-UniRule"/>
</dbReference>
<dbReference type="GO" id="GO:0000902">
    <property type="term" value="P:cell morphogenesis"/>
    <property type="evidence" value="ECO:0007669"/>
    <property type="project" value="UniProtKB-UniRule"/>
</dbReference>
<dbReference type="GO" id="GO:0071555">
    <property type="term" value="P:cell wall organization"/>
    <property type="evidence" value="ECO:0007669"/>
    <property type="project" value="UniProtKB-KW"/>
</dbReference>
<dbReference type="GO" id="GO:0009245">
    <property type="term" value="P:lipid A biosynthetic process"/>
    <property type="evidence" value="ECO:0007669"/>
    <property type="project" value="UniProtKB-UniRule"/>
</dbReference>
<dbReference type="GO" id="GO:0009252">
    <property type="term" value="P:peptidoglycan biosynthetic process"/>
    <property type="evidence" value="ECO:0007669"/>
    <property type="project" value="UniProtKB-UniRule"/>
</dbReference>
<dbReference type="GO" id="GO:0008360">
    <property type="term" value="P:regulation of cell shape"/>
    <property type="evidence" value="ECO:0007669"/>
    <property type="project" value="UniProtKB-KW"/>
</dbReference>
<dbReference type="GO" id="GO:0006048">
    <property type="term" value="P:UDP-N-acetylglucosamine biosynthetic process"/>
    <property type="evidence" value="ECO:0007669"/>
    <property type="project" value="UniProtKB-UniPathway"/>
</dbReference>
<dbReference type="CDD" id="cd02540">
    <property type="entry name" value="GT2_GlmU_N_bac"/>
    <property type="match status" value="1"/>
</dbReference>
<dbReference type="CDD" id="cd03353">
    <property type="entry name" value="LbH_GlmU_C"/>
    <property type="match status" value="1"/>
</dbReference>
<dbReference type="Gene3D" id="2.160.10.10">
    <property type="entry name" value="Hexapeptide repeat proteins"/>
    <property type="match status" value="1"/>
</dbReference>
<dbReference type="Gene3D" id="3.90.550.10">
    <property type="entry name" value="Spore Coat Polysaccharide Biosynthesis Protein SpsA, Chain A"/>
    <property type="match status" value="1"/>
</dbReference>
<dbReference type="HAMAP" id="MF_01631">
    <property type="entry name" value="GlmU"/>
    <property type="match status" value="1"/>
</dbReference>
<dbReference type="InterPro" id="IPR005882">
    <property type="entry name" value="Bifunctional_GlmU"/>
</dbReference>
<dbReference type="InterPro" id="IPR050065">
    <property type="entry name" value="GlmU-like"/>
</dbReference>
<dbReference type="InterPro" id="IPR038009">
    <property type="entry name" value="GlmU_C_LbH"/>
</dbReference>
<dbReference type="InterPro" id="IPR018357">
    <property type="entry name" value="Hexapep_transf_CS"/>
</dbReference>
<dbReference type="InterPro" id="IPR025877">
    <property type="entry name" value="MobA-like_NTP_Trfase"/>
</dbReference>
<dbReference type="InterPro" id="IPR029044">
    <property type="entry name" value="Nucleotide-diphossugar_trans"/>
</dbReference>
<dbReference type="InterPro" id="IPR011004">
    <property type="entry name" value="Trimer_LpxA-like_sf"/>
</dbReference>
<dbReference type="NCBIfam" id="TIGR01173">
    <property type="entry name" value="glmU"/>
    <property type="match status" value="1"/>
</dbReference>
<dbReference type="NCBIfam" id="NF010933">
    <property type="entry name" value="PRK14353.1"/>
    <property type="match status" value="1"/>
</dbReference>
<dbReference type="PANTHER" id="PTHR43584:SF3">
    <property type="entry name" value="BIFUNCTIONAL PROTEIN GLMU"/>
    <property type="match status" value="1"/>
</dbReference>
<dbReference type="PANTHER" id="PTHR43584">
    <property type="entry name" value="NUCLEOTIDYL TRANSFERASE"/>
    <property type="match status" value="1"/>
</dbReference>
<dbReference type="Pfam" id="PF12804">
    <property type="entry name" value="NTP_transf_3"/>
    <property type="match status" value="1"/>
</dbReference>
<dbReference type="SUPFAM" id="SSF53448">
    <property type="entry name" value="Nucleotide-diphospho-sugar transferases"/>
    <property type="match status" value="1"/>
</dbReference>
<dbReference type="SUPFAM" id="SSF51161">
    <property type="entry name" value="Trimeric LpxA-like enzymes"/>
    <property type="match status" value="1"/>
</dbReference>
<dbReference type="PROSITE" id="PS00101">
    <property type="entry name" value="HEXAPEP_TRANSFERASES"/>
    <property type="match status" value="1"/>
</dbReference>